<reference key="1">
    <citation type="journal article" date="1997" name="Nature">
        <title>The nucleotide sequence of Saccharomyces cerevisiae chromosome V.</title>
        <authorList>
            <person name="Dietrich F.S."/>
            <person name="Mulligan J.T."/>
            <person name="Hennessy K.M."/>
            <person name="Yelton M.A."/>
            <person name="Allen E."/>
            <person name="Araujo R."/>
            <person name="Aviles E."/>
            <person name="Berno A."/>
            <person name="Brennan T."/>
            <person name="Carpenter J."/>
            <person name="Chen E."/>
            <person name="Cherry J.M."/>
            <person name="Chung E."/>
            <person name="Duncan M."/>
            <person name="Guzman E."/>
            <person name="Hartzell G."/>
            <person name="Hunicke-Smith S."/>
            <person name="Hyman R.W."/>
            <person name="Kayser A."/>
            <person name="Komp C."/>
            <person name="Lashkari D."/>
            <person name="Lew H."/>
            <person name="Lin D."/>
            <person name="Mosedale D."/>
            <person name="Nakahara K."/>
            <person name="Namath A."/>
            <person name="Norgren R."/>
            <person name="Oefner P."/>
            <person name="Oh C."/>
            <person name="Petel F.X."/>
            <person name="Roberts D."/>
            <person name="Sehl P."/>
            <person name="Schramm S."/>
            <person name="Shogren T."/>
            <person name="Smith V."/>
            <person name="Taylor P."/>
            <person name="Wei Y."/>
            <person name="Botstein D."/>
            <person name="Davis R.W."/>
        </authorList>
    </citation>
    <scope>NUCLEOTIDE SEQUENCE [LARGE SCALE GENOMIC DNA]</scope>
    <source>
        <strain>ATCC 204508 / S288c</strain>
    </source>
</reference>
<reference key="2">
    <citation type="journal article" date="2014" name="G3 (Bethesda)">
        <title>The reference genome sequence of Saccharomyces cerevisiae: Then and now.</title>
        <authorList>
            <person name="Engel S.R."/>
            <person name="Dietrich F.S."/>
            <person name="Fisk D.G."/>
            <person name="Binkley G."/>
            <person name="Balakrishnan R."/>
            <person name="Costanzo M.C."/>
            <person name="Dwight S.S."/>
            <person name="Hitz B.C."/>
            <person name="Karra K."/>
            <person name="Nash R.S."/>
            <person name="Weng S."/>
            <person name="Wong E.D."/>
            <person name="Lloyd P."/>
            <person name="Skrzypek M.S."/>
            <person name="Miyasato S.R."/>
            <person name="Simison M."/>
            <person name="Cherry J.M."/>
        </authorList>
    </citation>
    <scope>GENOME REANNOTATION</scope>
    <source>
        <strain>ATCC 204508 / S288c</strain>
    </source>
</reference>
<reference key="3">
    <citation type="journal article" date="2003" name="Proc. Natl. Acad. Sci. U.S.A.">
        <title>The proteome of Saccharomyces cerevisiae mitochondria.</title>
        <authorList>
            <person name="Sickmann A."/>
            <person name="Reinders J."/>
            <person name="Wagner Y."/>
            <person name="Joppich C."/>
            <person name="Zahedi R.P."/>
            <person name="Meyer H.E."/>
            <person name="Schoenfisch B."/>
            <person name="Perschil I."/>
            <person name="Chacinska A."/>
            <person name="Guiard B."/>
            <person name="Rehling P."/>
            <person name="Pfanner N."/>
            <person name="Meisinger C."/>
        </authorList>
    </citation>
    <scope>SUBCELLULAR LOCATION [LARGE SCALE ANALYSIS]</scope>
</reference>
<organism>
    <name type="scientific">Saccharomyces cerevisiae (strain ATCC 204508 / S288c)</name>
    <name type="common">Baker's yeast</name>
    <dbReference type="NCBI Taxonomy" id="559292"/>
    <lineage>
        <taxon>Eukaryota</taxon>
        <taxon>Fungi</taxon>
        <taxon>Dikarya</taxon>
        <taxon>Ascomycota</taxon>
        <taxon>Saccharomycotina</taxon>
        <taxon>Saccharomycetes</taxon>
        <taxon>Saccharomycetales</taxon>
        <taxon>Saccharomycetaceae</taxon>
        <taxon>Saccharomyces</taxon>
    </lineage>
</organism>
<accession>A0A023PZB3</accession>
<accession>A0A078N230</accession>
<proteinExistence type="predicted"/>
<comment type="subcellular location">
    <subcellularLocation>
        <location evidence="1">Mitochondrion</location>
    </subcellularLocation>
</comment>
<name>FMP49_YEAST</name>
<keyword id="KW-0496">Mitochondrion</keyword>
<keyword id="KW-1185">Reference proteome</keyword>
<gene>
    <name evidence="2" type="primary">FMP49</name>
    <name evidence="4" type="ordered locus">YER038W-A</name>
</gene>
<protein>
    <recommendedName>
        <fullName evidence="3">Protein FMP49, mitochondrial</fullName>
    </recommendedName>
    <alternativeName>
        <fullName evidence="2">Found in mitochondrial proteome protein 49</fullName>
    </alternativeName>
</protein>
<dbReference type="EMBL" id="KJ412228">
    <property type="protein sequence ID" value="AHX39271.1"/>
    <property type="molecule type" value="Genomic_DNA"/>
</dbReference>
<dbReference type="EMBL" id="BK006939">
    <property type="protein sequence ID" value="DAA64607.1"/>
    <property type="molecule type" value="Genomic_DNA"/>
</dbReference>
<dbReference type="RefSeq" id="NP_001288277.1">
    <property type="nucleotide sequence ID" value="NM_001301348.1"/>
</dbReference>
<dbReference type="SMR" id="A0A023PZB3"/>
<dbReference type="FunCoup" id="A0A023PZB3">
    <property type="interactions" value="9"/>
</dbReference>
<dbReference type="PaxDb" id="4932-YER038W-A"/>
<dbReference type="EnsemblFungi" id="YER038W-A_mRNA">
    <property type="protein sequence ID" value="YER038W-A"/>
    <property type="gene ID" value="YER038W-A"/>
</dbReference>
<dbReference type="GeneID" id="20098144"/>
<dbReference type="KEGG" id="sce:YER038W-A"/>
<dbReference type="AGR" id="SGD:S000028746"/>
<dbReference type="SGD" id="S000028746">
    <property type="gene designation" value="FMP49"/>
</dbReference>
<dbReference type="VEuPathDB" id="FungiDB:YER038W-A"/>
<dbReference type="HOGENOM" id="CLU_1982841_0_0_1"/>
<dbReference type="InParanoid" id="A0A023PZB3"/>
<dbReference type="BioGRID-ORCS" id="20098144">
    <property type="hits" value="4 hits in 10 CRISPR screens"/>
</dbReference>
<dbReference type="PRO" id="PR:A0A023PZB3"/>
<dbReference type="Proteomes" id="UP000002311">
    <property type="component" value="Chromosome V"/>
</dbReference>
<dbReference type="RNAct" id="A0A023PZB3">
    <property type="molecule type" value="protein"/>
</dbReference>
<dbReference type="GO" id="GO:0005739">
    <property type="term" value="C:mitochondrion"/>
    <property type="evidence" value="ECO:0007005"/>
    <property type="project" value="SGD"/>
</dbReference>
<sequence length="126" mass="14348">MYYFSRVAARTFCCCIFFCLATAYSRPDRNPRKIEKKDKKFFGASKNTNPANAMGNLFKAPTIEYVVEEVTRTHQPEQYDIPTDMSPLMTIAASESADKFTDKFFVDQSSIMKEKTSSKGNARTLL</sequence>
<feature type="chain" id="PRO_0000430968" description="Protein FMP49, mitochondrial">
    <location>
        <begin position="1"/>
        <end position="126"/>
    </location>
</feature>
<evidence type="ECO:0000269" key="1">
    <source>
    </source>
</evidence>
<evidence type="ECO:0000303" key="2">
    <source>
    </source>
</evidence>
<evidence type="ECO:0000305" key="3">
    <source>
    </source>
</evidence>
<evidence type="ECO:0000312" key="4">
    <source>
        <dbReference type="SGD" id="S000028746"/>
    </source>
</evidence>